<protein>
    <recommendedName>
        <fullName evidence="1">Orotate phosphoribosyltransferase</fullName>
        <shortName evidence="1">OPRT</shortName>
        <shortName evidence="1">OPRTase</shortName>
        <ecNumber evidence="1">2.4.2.10</ecNumber>
    </recommendedName>
</protein>
<feature type="chain" id="PRO_0000298886" description="Orotate phosphoribosyltransferase">
    <location>
        <begin position="1"/>
        <end position="172"/>
    </location>
</feature>
<feature type="binding site" evidence="1">
    <location>
        <position position="88"/>
    </location>
    <ligand>
        <name>5-phospho-alpha-D-ribose 1-diphosphate</name>
        <dbReference type="ChEBI" id="CHEBI:58017"/>
        <note>ligand shared between dimeric partners</note>
    </ligand>
</feature>
<feature type="binding site" description="in other chain" evidence="1">
    <location>
        <position position="89"/>
    </location>
    <ligand>
        <name>5-phospho-alpha-D-ribose 1-diphosphate</name>
        <dbReference type="ChEBI" id="CHEBI:58017"/>
        <note>ligand shared between dimeric partners</note>
    </ligand>
</feature>
<feature type="binding site" evidence="1">
    <location>
        <position position="92"/>
    </location>
    <ligand>
        <name>5-phospho-alpha-D-ribose 1-diphosphate</name>
        <dbReference type="ChEBI" id="CHEBI:58017"/>
        <note>ligand shared between dimeric partners</note>
    </ligand>
</feature>
<feature type="binding site" evidence="1">
    <location>
        <position position="94"/>
    </location>
    <ligand>
        <name>5-phospho-alpha-D-ribose 1-diphosphate</name>
        <dbReference type="ChEBI" id="CHEBI:58017"/>
        <note>ligand shared between dimeric partners</note>
    </ligand>
</feature>
<feature type="binding site" description="in other chain" evidence="1">
    <location>
        <begin position="113"/>
        <end position="121"/>
    </location>
    <ligand>
        <name>5-phospho-alpha-D-ribose 1-diphosphate</name>
        <dbReference type="ChEBI" id="CHEBI:58017"/>
        <note>ligand shared between dimeric partners</note>
    </ligand>
</feature>
<feature type="binding site" evidence="1">
    <location>
        <position position="117"/>
    </location>
    <ligand>
        <name>orotate</name>
        <dbReference type="ChEBI" id="CHEBI:30839"/>
    </ligand>
</feature>
<feature type="binding site" evidence="1">
    <location>
        <position position="145"/>
    </location>
    <ligand>
        <name>orotate</name>
        <dbReference type="ChEBI" id="CHEBI:30839"/>
    </ligand>
</feature>
<accession>Q2FPQ2</accession>
<sequence length="172" mass="17871">MVTATLREMLISAEAIRFGDFTLASGKKSTVYIDIKKAITSPAILKKIAAEVLTHSTDFDAVAGVAVGGVPLAVSVSLASDKPYVIIRKEQKGHGLASLIIGDVAGKRILLVEDVTTSGGSAVFGIEQLRSAGAVVTDVIAVVDRNEGAGKTLQGLDITLTPLVRMQDLING</sequence>
<proteinExistence type="inferred from homology"/>
<gene>
    <name evidence="1" type="primary">pyrE</name>
    <name type="ordered locus">Mhun_1108</name>
</gene>
<name>PYRE_METHJ</name>
<dbReference type="EC" id="2.4.2.10" evidence="1"/>
<dbReference type="EMBL" id="CP000254">
    <property type="protein sequence ID" value="ABD40857.1"/>
    <property type="molecule type" value="Genomic_DNA"/>
</dbReference>
<dbReference type="RefSeq" id="WP_011448135.1">
    <property type="nucleotide sequence ID" value="NC_007796.1"/>
</dbReference>
<dbReference type="SMR" id="Q2FPQ2"/>
<dbReference type="FunCoup" id="Q2FPQ2">
    <property type="interactions" value="129"/>
</dbReference>
<dbReference type="STRING" id="323259.Mhun_1108"/>
<dbReference type="EnsemblBacteria" id="ABD40857">
    <property type="protein sequence ID" value="ABD40857"/>
    <property type="gene ID" value="Mhun_1108"/>
</dbReference>
<dbReference type="GeneID" id="3922141"/>
<dbReference type="KEGG" id="mhu:Mhun_1108"/>
<dbReference type="eggNOG" id="arCOG00029">
    <property type="taxonomic scope" value="Archaea"/>
</dbReference>
<dbReference type="HOGENOM" id="CLU_074878_2_0_2"/>
<dbReference type="InParanoid" id="Q2FPQ2"/>
<dbReference type="OrthoDB" id="9089at2157"/>
<dbReference type="UniPathway" id="UPA00070">
    <property type="reaction ID" value="UER00119"/>
</dbReference>
<dbReference type="Proteomes" id="UP000001941">
    <property type="component" value="Chromosome"/>
</dbReference>
<dbReference type="GO" id="GO:0000287">
    <property type="term" value="F:magnesium ion binding"/>
    <property type="evidence" value="ECO:0007669"/>
    <property type="project" value="UniProtKB-UniRule"/>
</dbReference>
<dbReference type="GO" id="GO:0004588">
    <property type="term" value="F:orotate phosphoribosyltransferase activity"/>
    <property type="evidence" value="ECO:0007669"/>
    <property type="project" value="UniProtKB-UniRule"/>
</dbReference>
<dbReference type="GO" id="GO:0044205">
    <property type="term" value="P:'de novo' UMP biosynthetic process"/>
    <property type="evidence" value="ECO:0007669"/>
    <property type="project" value="UniProtKB-UniRule"/>
</dbReference>
<dbReference type="GO" id="GO:0019856">
    <property type="term" value="P:pyrimidine nucleobase biosynthetic process"/>
    <property type="evidence" value="ECO:0007669"/>
    <property type="project" value="TreeGrafter"/>
</dbReference>
<dbReference type="CDD" id="cd06223">
    <property type="entry name" value="PRTases_typeI"/>
    <property type="match status" value="1"/>
</dbReference>
<dbReference type="Gene3D" id="3.40.50.2020">
    <property type="match status" value="1"/>
</dbReference>
<dbReference type="HAMAP" id="MF_01208">
    <property type="entry name" value="PyrE"/>
    <property type="match status" value="1"/>
</dbReference>
<dbReference type="InterPro" id="IPR023031">
    <property type="entry name" value="OPRT"/>
</dbReference>
<dbReference type="InterPro" id="IPR004467">
    <property type="entry name" value="Or_phspho_trans_dom"/>
</dbReference>
<dbReference type="InterPro" id="IPR000836">
    <property type="entry name" value="PRibTrfase_dom"/>
</dbReference>
<dbReference type="InterPro" id="IPR029057">
    <property type="entry name" value="PRTase-like"/>
</dbReference>
<dbReference type="NCBIfam" id="TIGR00336">
    <property type="entry name" value="pyrE"/>
    <property type="match status" value="1"/>
</dbReference>
<dbReference type="PANTHER" id="PTHR19278">
    <property type="entry name" value="OROTATE PHOSPHORIBOSYLTRANSFERASE"/>
    <property type="match status" value="1"/>
</dbReference>
<dbReference type="PANTHER" id="PTHR19278:SF9">
    <property type="entry name" value="URIDINE 5'-MONOPHOSPHATE SYNTHASE"/>
    <property type="match status" value="1"/>
</dbReference>
<dbReference type="Pfam" id="PF00156">
    <property type="entry name" value="Pribosyltran"/>
    <property type="match status" value="1"/>
</dbReference>
<dbReference type="SUPFAM" id="SSF53271">
    <property type="entry name" value="PRTase-like"/>
    <property type="match status" value="1"/>
</dbReference>
<reference key="1">
    <citation type="journal article" date="2016" name="Stand. Genomic Sci.">
        <title>Complete genome sequence of Methanospirillum hungatei type strain JF1.</title>
        <authorList>
            <person name="Gunsalus R.P."/>
            <person name="Cook L.E."/>
            <person name="Crable B."/>
            <person name="Rohlin L."/>
            <person name="McDonald E."/>
            <person name="Mouttaki H."/>
            <person name="Sieber J.R."/>
            <person name="Poweleit N."/>
            <person name="Zhou H."/>
            <person name="Lapidus A.L."/>
            <person name="Daligault H.E."/>
            <person name="Land M."/>
            <person name="Gilna P."/>
            <person name="Ivanova N."/>
            <person name="Kyrpides N."/>
            <person name="Culley D.E."/>
            <person name="McInerney M.J."/>
        </authorList>
    </citation>
    <scope>NUCLEOTIDE SEQUENCE [LARGE SCALE GENOMIC DNA]</scope>
    <source>
        <strain>ATCC 27890 / DSM 864 / NBRC 100397 / JF-1</strain>
    </source>
</reference>
<evidence type="ECO:0000255" key="1">
    <source>
        <dbReference type="HAMAP-Rule" id="MF_01208"/>
    </source>
</evidence>
<keyword id="KW-0328">Glycosyltransferase</keyword>
<keyword id="KW-0460">Magnesium</keyword>
<keyword id="KW-0665">Pyrimidine biosynthesis</keyword>
<keyword id="KW-1185">Reference proteome</keyword>
<keyword id="KW-0808">Transferase</keyword>
<organism>
    <name type="scientific">Methanospirillum hungatei JF-1 (strain ATCC 27890 / DSM 864 / NBRC 100397 / JF-1)</name>
    <dbReference type="NCBI Taxonomy" id="323259"/>
    <lineage>
        <taxon>Archaea</taxon>
        <taxon>Methanobacteriati</taxon>
        <taxon>Methanobacteriota</taxon>
        <taxon>Stenosarchaea group</taxon>
        <taxon>Methanomicrobia</taxon>
        <taxon>Methanomicrobiales</taxon>
        <taxon>Methanospirillaceae</taxon>
        <taxon>Methanospirillum</taxon>
    </lineage>
</organism>
<comment type="function">
    <text evidence="1">Catalyzes the transfer of a ribosyl phosphate group from 5-phosphoribose 1-diphosphate to orotate, leading to the formation of orotidine monophosphate (OMP).</text>
</comment>
<comment type="catalytic activity">
    <reaction evidence="1">
        <text>orotidine 5'-phosphate + diphosphate = orotate + 5-phospho-alpha-D-ribose 1-diphosphate</text>
        <dbReference type="Rhea" id="RHEA:10380"/>
        <dbReference type="ChEBI" id="CHEBI:30839"/>
        <dbReference type="ChEBI" id="CHEBI:33019"/>
        <dbReference type="ChEBI" id="CHEBI:57538"/>
        <dbReference type="ChEBI" id="CHEBI:58017"/>
        <dbReference type="EC" id="2.4.2.10"/>
    </reaction>
</comment>
<comment type="cofactor">
    <cofactor evidence="1">
        <name>Mg(2+)</name>
        <dbReference type="ChEBI" id="CHEBI:18420"/>
    </cofactor>
</comment>
<comment type="pathway">
    <text evidence="1">Pyrimidine metabolism; UMP biosynthesis via de novo pathway; UMP from orotate: step 1/2.</text>
</comment>
<comment type="subunit">
    <text evidence="1">Homodimer.</text>
</comment>
<comment type="similarity">
    <text evidence="1">Belongs to the purine/pyrimidine phosphoribosyltransferase family. PyrE subfamily.</text>
</comment>